<organism>
    <name type="scientific">Erythrobacter litoralis (strain HTCC2594)</name>
    <dbReference type="NCBI Taxonomy" id="314225"/>
    <lineage>
        <taxon>Bacteria</taxon>
        <taxon>Pseudomonadati</taxon>
        <taxon>Pseudomonadota</taxon>
        <taxon>Alphaproteobacteria</taxon>
        <taxon>Sphingomonadales</taxon>
        <taxon>Erythrobacteraceae</taxon>
        <taxon>Erythrobacter/Porphyrobacter group</taxon>
        <taxon>Erythrobacter</taxon>
    </lineage>
</organism>
<comment type="similarity">
    <text evidence="1">Belongs to the bacterial ribosomal protein bL32 family.</text>
</comment>
<name>RL32_ERYLH</name>
<gene>
    <name evidence="1" type="primary">rpmF</name>
    <name type="ordered locus">ELI_08630</name>
</gene>
<reference key="1">
    <citation type="journal article" date="2009" name="J. Bacteriol.">
        <title>Complete genome sequence of Erythrobacter litoralis HTCC2594.</title>
        <authorList>
            <person name="Oh H.M."/>
            <person name="Giovannoni S.J."/>
            <person name="Ferriera S."/>
            <person name="Johnson J."/>
            <person name="Cho J.C."/>
        </authorList>
    </citation>
    <scope>NUCLEOTIDE SEQUENCE [LARGE SCALE GENOMIC DNA]</scope>
    <source>
        <strain>HTCC2594</strain>
    </source>
</reference>
<keyword id="KW-1185">Reference proteome</keyword>
<keyword id="KW-0687">Ribonucleoprotein</keyword>
<keyword id="KW-0689">Ribosomal protein</keyword>
<proteinExistence type="inferred from homology"/>
<protein>
    <recommendedName>
        <fullName evidence="1">Large ribosomal subunit protein bL32</fullName>
    </recommendedName>
    <alternativeName>
        <fullName evidence="3">50S ribosomal protein L32</fullName>
    </alternativeName>
</protein>
<evidence type="ECO:0000255" key="1">
    <source>
        <dbReference type="HAMAP-Rule" id="MF_00340"/>
    </source>
</evidence>
<evidence type="ECO:0000256" key="2">
    <source>
        <dbReference type="SAM" id="MobiDB-lite"/>
    </source>
</evidence>
<evidence type="ECO:0000305" key="3"/>
<accession>Q2N923</accession>
<sequence length="59" mass="6743">MAVPKRKVSPHRRGNRRAHDSLKVEAFHECNNCGELKRPHNMCSHCGFYNGREVLAPSL</sequence>
<dbReference type="EMBL" id="CP000157">
    <property type="protein sequence ID" value="ABC63818.1"/>
    <property type="molecule type" value="Genomic_DNA"/>
</dbReference>
<dbReference type="RefSeq" id="WP_011414648.1">
    <property type="nucleotide sequence ID" value="NC_007722.1"/>
</dbReference>
<dbReference type="SMR" id="Q2N923"/>
<dbReference type="STRING" id="314225.ELI_08630"/>
<dbReference type="KEGG" id="eli:ELI_08630"/>
<dbReference type="eggNOG" id="COG0333">
    <property type="taxonomic scope" value="Bacteria"/>
</dbReference>
<dbReference type="HOGENOM" id="CLU_129084_1_3_5"/>
<dbReference type="OrthoDB" id="9801927at2"/>
<dbReference type="Proteomes" id="UP000008808">
    <property type="component" value="Chromosome"/>
</dbReference>
<dbReference type="GO" id="GO:0015934">
    <property type="term" value="C:large ribosomal subunit"/>
    <property type="evidence" value="ECO:0007669"/>
    <property type="project" value="InterPro"/>
</dbReference>
<dbReference type="GO" id="GO:0003735">
    <property type="term" value="F:structural constituent of ribosome"/>
    <property type="evidence" value="ECO:0007669"/>
    <property type="project" value="InterPro"/>
</dbReference>
<dbReference type="GO" id="GO:0006412">
    <property type="term" value="P:translation"/>
    <property type="evidence" value="ECO:0007669"/>
    <property type="project" value="UniProtKB-UniRule"/>
</dbReference>
<dbReference type="Gene3D" id="1.20.5.640">
    <property type="entry name" value="Single helix bin"/>
    <property type="match status" value="1"/>
</dbReference>
<dbReference type="HAMAP" id="MF_00340">
    <property type="entry name" value="Ribosomal_bL32"/>
    <property type="match status" value="1"/>
</dbReference>
<dbReference type="InterPro" id="IPR002677">
    <property type="entry name" value="Ribosomal_bL32"/>
</dbReference>
<dbReference type="InterPro" id="IPR044957">
    <property type="entry name" value="Ribosomal_bL32_bact"/>
</dbReference>
<dbReference type="InterPro" id="IPR011332">
    <property type="entry name" value="Ribosomal_zn-bd"/>
</dbReference>
<dbReference type="NCBIfam" id="TIGR01031">
    <property type="entry name" value="rpmF_bact"/>
    <property type="match status" value="1"/>
</dbReference>
<dbReference type="PANTHER" id="PTHR35534">
    <property type="entry name" value="50S RIBOSOMAL PROTEIN L32"/>
    <property type="match status" value="1"/>
</dbReference>
<dbReference type="PANTHER" id="PTHR35534:SF1">
    <property type="entry name" value="LARGE RIBOSOMAL SUBUNIT PROTEIN BL32"/>
    <property type="match status" value="1"/>
</dbReference>
<dbReference type="Pfam" id="PF01783">
    <property type="entry name" value="Ribosomal_L32p"/>
    <property type="match status" value="1"/>
</dbReference>
<dbReference type="SUPFAM" id="SSF57829">
    <property type="entry name" value="Zn-binding ribosomal proteins"/>
    <property type="match status" value="1"/>
</dbReference>
<feature type="chain" id="PRO_0000296461" description="Large ribosomal subunit protein bL32">
    <location>
        <begin position="1"/>
        <end position="59"/>
    </location>
</feature>
<feature type="region of interest" description="Disordered" evidence="2">
    <location>
        <begin position="1"/>
        <end position="20"/>
    </location>
</feature>
<feature type="compositionally biased region" description="Basic residues" evidence="2">
    <location>
        <begin position="1"/>
        <end position="16"/>
    </location>
</feature>